<organism>
    <name type="scientific">Shouchella clausii (strain KSM-K16)</name>
    <name type="common">Alkalihalobacillus clausii</name>
    <dbReference type="NCBI Taxonomy" id="66692"/>
    <lineage>
        <taxon>Bacteria</taxon>
        <taxon>Bacillati</taxon>
        <taxon>Bacillota</taxon>
        <taxon>Bacilli</taxon>
        <taxon>Bacillales</taxon>
        <taxon>Bacillaceae</taxon>
        <taxon>Shouchella</taxon>
    </lineage>
</organism>
<proteinExistence type="inferred from homology"/>
<reference key="1">
    <citation type="submission" date="2003-10" db="EMBL/GenBank/DDBJ databases">
        <title>The complete genome sequence of the alkaliphilic Bacillus clausii KSM-K16.</title>
        <authorList>
            <person name="Takaki Y."/>
            <person name="Kageyama Y."/>
            <person name="Shimamura S."/>
            <person name="Suzuki H."/>
            <person name="Nishi S."/>
            <person name="Hatada Y."/>
            <person name="Kawai S."/>
            <person name="Ito S."/>
            <person name="Horikoshi K."/>
        </authorList>
    </citation>
    <scope>NUCLEOTIDE SEQUENCE [LARGE SCALE GENOMIC DNA]</scope>
    <source>
        <strain>KSM-K16</strain>
    </source>
</reference>
<sequence>MSFSHQEIEKKWQAFWEENKTFKTDEQAEGPHFYALDMFPYPSGAGLHVGHPEGYTATDILARMKRMQGYNVLHPMGWDAFGLPAEQYALDTGKHPATFTKQNIDTFKRQIKELGFSYDWDREISTTDPHYYKWTQWIFLKLYEKGLAYIDEVAVNWCPALGTVLANEEIVDGVSERGGHPVERRPMKQWVLRITAYAERLLEDLEELEWPESLKDMQRNWIGKSEGAEVTFKINEHSVNVFTTRPDTLFGATYMVLAPEHKLVTEITTDEQKEAVEAYQKQVALKSDIERTDLAKEKTGAFTGAYAINPVNGEKIPVWIADYVLISYGTGAVMAVPAHDERDFEFANAFGLPIKEVVAGGDVSKAAYTGDGEHVNSDFLNGLNKQEAVEKMIVWLEENGAGQRKVTYRLRDWLFSRQRYWGEPIPIIHWEDGSMSALDESELPLVLPDLEEIKPSGTGESPLANAKDWLEVVDPKTGMRGRRETNTMPQWAGSCWYYLRYIDPTNDEALADPEKLKNWLPVDTYIGGAEHAVLHLLYARFWHKFLYDIGVVPTKEPFQKVFNQGMILGENNEKMSKSKGNVVNPDEIIASHGADTLRLYEMFMGPLDASVAWSTNGLDGSRRFLERVWRLIVNEETGKLNSNVKDVEGNEAFVRTYHQTVKKVTEDFAELRFNTGISQLMVFVNEGNKQEVLPKALIEGFVKLLSPVAPHIAEELWEKLGHTDTITYEAWPTYDESLLVENEVEVVVQMNGKVKTKLVINKGASKEEMEAAALADEKVQAAIGEKTIRKVIAVPGKLVNIVVG</sequence>
<protein>
    <recommendedName>
        <fullName evidence="1">Leucine--tRNA ligase</fullName>
        <ecNumber evidence="1">6.1.1.4</ecNumber>
    </recommendedName>
    <alternativeName>
        <fullName evidence="1">Leucyl-tRNA synthetase</fullName>
        <shortName evidence="1">LeuRS</shortName>
    </alternativeName>
</protein>
<evidence type="ECO:0000255" key="1">
    <source>
        <dbReference type="HAMAP-Rule" id="MF_00049"/>
    </source>
</evidence>
<accession>Q5WE05</accession>
<comment type="catalytic activity">
    <reaction evidence="1">
        <text>tRNA(Leu) + L-leucine + ATP = L-leucyl-tRNA(Leu) + AMP + diphosphate</text>
        <dbReference type="Rhea" id="RHEA:11688"/>
        <dbReference type="Rhea" id="RHEA-COMP:9613"/>
        <dbReference type="Rhea" id="RHEA-COMP:9622"/>
        <dbReference type="ChEBI" id="CHEBI:30616"/>
        <dbReference type="ChEBI" id="CHEBI:33019"/>
        <dbReference type="ChEBI" id="CHEBI:57427"/>
        <dbReference type="ChEBI" id="CHEBI:78442"/>
        <dbReference type="ChEBI" id="CHEBI:78494"/>
        <dbReference type="ChEBI" id="CHEBI:456215"/>
        <dbReference type="EC" id="6.1.1.4"/>
    </reaction>
</comment>
<comment type="subcellular location">
    <subcellularLocation>
        <location evidence="1">Cytoplasm</location>
    </subcellularLocation>
</comment>
<comment type="similarity">
    <text evidence="1">Belongs to the class-I aminoacyl-tRNA synthetase family.</text>
</comment>
<dbReference type="EC" id="6.1.1.4" evidence="1"/>
<dbReference type="EMBL" id="AP006627">
    <property type="protein sequence ID" value="BAD65405.1"/>
    <property type="molecule type" value="Genomic_DNA"/>
</dbReference>
<dbReference type="RefSeq" id="WP_011247713.1">
    <property type="nucleotide sequence ID" value="NC_006582.1"/>
</dbReference>
<dbReference type="SMR" id="Q5WE05"/>
<dbReference type="STRING" id="66692.ABC2871"/>
<dbReference type="KEGG" id="bcl:ABC2871"/>
<dbReference type="eggNOG" id="COG0495">
    <property type="taxonomic scope" value="Bacteria"/>
</dbReference>
<dbReference type="HOGENOM" id="CLU_004427_0_0_9"/>
<dbReference type="OrthoDB" id="9810365at2"/>
<dbReference type="Proteomes" id="UP000001168">
    <property type="component" value="Chromosome"/>
</dbReference>
<dbReference type="GO" id="GO:0005829">
    <property type="term" value="C:cytosol"/>
    <property type="evidence" value="ECO:0007669"/>
    <property type="project" value="TreeGrafter"/>
</dbReference>
<dbReference type="GO" id="GO:0002161">
    <property type="term" value="F:aminoacyl-tRNA deacylase activity"/>
    <property type="evidence" value="ECO:0007669"/>
    <property type="project" value="InterPro"/>
</dbReference>
<dbReference type="GO" id="GO:0005524">
    <property type="term" value="F:ATP binding"/>
    <property type="evidence" value="ECO:0007669"/>
    <property type="project" value="UniProtKB-UniRule"/>
</dbReference>
<dbReference type="GO" id="GO:0004823">
    <property type="term" value="F:leucine-tRNA ligase activity"/>
    <property type="evidence" value="ECO:0007669"/>
    <property type="project" value="UniProtKB-UniRule"/>
</dbReference>
<dbReference type="GO" id="GO:0006429">
    <property type="term" value="P:leucyl-tRNA aminoacylation"/>
    <property type="evidence" value="ECO:0007669"/>
    <property type="project" value="UniProtKB-UniRule"/>
</dbReference>
<dbReference type="CDD" id="cd07958">
    <property type="entry name" value="Anticodon_Ia_Leu_BEm"/>
    <property type="match status" value="1"/>
</dbReference>
<dbReference type="CDD" id="cd00812">
    <property type="entry name" value="LeuRS_core"/>
    <property type="match status" value="1"/>
</dbReference>
<dbReference type="FunFam" id="3.10.20.590:FF:000001">
    <property type="entry name" value="Leucine--tRNA ligase"/>
    <property type="match status" value="1"/>
</dbReference>
<dbReference type="FunFam" id="3.40.50.620:FF:000056">
    <property type="entry name" value="Leucine--tRNA ligase"/>
    <property type="match status" value="1"/>
</dbReference>
<dbReference type="FunFam" id="3.40.50.620:FF:000077">
    <property type="entry name" value="Leucine--tRNA ligase"/>
    <property type="match status" value="1"/>
</dbReference>
<dbReference type="FunFam" id="3.90.740.10:FF:000017">
    <property type="entry name" value="Leucine--tRNA ligase"/>
    <property type="match status" value="1"/>
</dbReference>
<dbReference type="FunFam" id="1.10.730.10:FF:000011">
    <property type="entry name" value="Leucine--tRNA ligase chloroplastic/mitochondrial"/>
    <property type="match status" value="1"/>
</dbReference>
<dbReference type="Gene3D" id="3.10.20.590">
    <property type="match status" value="1"/>
</dbReference>
<dbReference type="Gene3D" id="3.40.50.620">
    <property type="entry name" value="HUPs"/>
    <property type="match status" value="2"/>
</dbReference>
<dbReference type="Gene3D" id="1.10.730.10">
    <property type="entry name" value="Isoleucyl-tRNA Synthetase, Domain 1"/>
    <property type="match status" value="1"/>
</dbReference>
<dbReference type="Gene3D" id="3.90.740.10">
    <property type="entry name" value="Valyl/Leucyl/Isoleucyl-tRNA synthetase, editing domain"/>
    <property type="match status" value="1"/>
</dbReference>
<dbReference type="HAMAP" id="MF_00049_B">
    <property type="entry name" value="Leu_tRNA_synth_B"/>
    <property type="match status" value="1"/>
</dbReference>
<dbReference type="InterPro" id="IPR001412">
    <property type="entry name" value="aa-tRNA-synth_I_CS"/>
</dbReference>
<dbReference type="InterPro" id="IPR002300">
    <property type="entry name" value="aa-tRNA-synth_Ia"/>
</dbReference>
<dbReference type="InterPro" id="IPR002302">
    <property type="entry name" value="Leu-tRNA-ligase"/>
</dbReference>
<dbReference type="InterPro" id="IPR025709">
    <property type="entry name" value="Leu_tRNA-synth_edit"/>
</dbReference>
<dbReference type="InterPro" id="IPR013155">
    <property type="entry name" value="M/V/L/I-tRNA-synth_anticd-bd"/>
</dbReference>
<dbReference type="InterPro" id="IPR015413">
    <property type="entry name" value="Methionyl/Leucyl_tRNA_Synth"/>
</dbReference>
<dbReference type="InterPro" id="IPR014729">
    <property type="entry name" value="Rossmann-like_a/b/a_fold"/>
</dbReference>
<dbReference type="InterPro" id="IPR009080">
    <property type="entry name" value="tRNAsynth_Ia_anticodon-bd"/>
</dbReference>
<dbReference type="InterPro" id="IPR009008">
    <property type="entry name" value="Val/Leu/Ile-tRNA-synth_edit"/>
</dbReference>
<dbReference type="NCBIfam" id="TIGR00396">
    <property type="entry name" value="leuS_bact"/>
    <property type="match status" value="1"/>
</dbReference>
<dbReference type="PANTHER" id="PTHR43740:SF2">
    <property type="entry name" value="LEUCINE--TRNA LIGASE, MITOCHONDRIAL"/>
    <property type="match status" value="1"/>
</dbReference>
<dbReference type="PANTHER" id="PTHR43740">
    <property type="entry name" value="LEUCYL-TRNA SYNTHETASE"/>
    <property type="match status" value="1"/>
</dbReference>
<dbReference type="Pfam" id="PF08264">
    <property type="entry name" value="Anticodon_1"/>
    <property type="match status" value="1"/>
</dbReference>
<dbReference type="Pfam" id="PF00133">
    <property type="entry name" value="tRNA-synt_1"/>
    <property type="match status" value="1"/>
</dbReference>
<dbReference type="Pfam" id="PF13603">
    <property type="entry name" value="tRNA-synt_1_2"/>
    <property type="match status" value="1"/>
</dbReference>
<dbReference type="Pfam" id="PF09334">
    <property type="entry name" value="tRNA-synt_1g"/>
    <property type="match status" value="1"/>
</dbReference>
<dbReference type="PRINTS" id="PR00985">
    <property type="entry name" value="TRNASYNTHLEU"/>
</dbReference>
<dbReference type="SUPFAM" id="SSF47323">
    <property type="entry name" value="Anticodon-binding domain of a subclass of class I aminoacyl-tRNA synthetases"/>
    <property type="match status" value="1"/>
</dbReference>
<dbReference type="SUPFAM" id="SSF52374">
    <property type="entry name" value="Nucleotidylyl transferase"/>
    <property type="match status" value="1"/>
</dbReference>
<dbReference type="SUPFAM" id="SSF50677">
    <property type="entry name" value="ValRS/IleRS/LeuRS editing domain"/>
    <property type="match status" value="1"/>
</dbReference>
<dbReference type="PROSITE" id="PS00178">
    <property type="entry name" value="AA_TRNA_LIGASE_I"/>
    <property type="match status" value="1"/>
</dbReference>
<gene>
    <name evidence="1" type="primary">leuS</name>
    <name type="ordered locus">ABC2871</name>
</gene>
<name>SYL_SHOC1</name>
<feature type="chain" id="PRO_0000151972" description="Leucine--tRNA ligase">
    <location>
        <begin position="1"/>
        <end position="804"/>
    </location>
</feature>
<feature type="short sequence motif" description="'HIGH' region">
    <location>
        <begin position="40"/>
        <end position="51"/>
    </location>
</feature>
<feature type="short sequence motif" description="'KMSKS' region">
    <location>
        <begin position="574"/>
        <end position="578"/>
    </location>
</feature>
<feature type="binding site" evidence="1">
    <location>
        <position position="577"/>
    </location>
    <ligand>
        <name>ATP</name>
        <dbReference type="ChEBI" id="CHEBI:30616"/>
    </ligand>
</feature>
<keyword id="KW-0030">Aminoacyl-tRNA synthetase</keyword>
<keyword id="KW-0067">ATP-binding</keyword>
<keyword id="KW-0963">Cytoplasm</keyword>
<keyword id="KW-0436">Ligase</keyword>
<keyword id="KW-0547">Nucleotide-binding</keyword>
<keyword id="KW-0648">Protein biosynthesis</keyword>
<keyword id="KW-1185">Reference proteome</keyword>